<feature type="chain" id="PRO_0000384885" description="Putative transmembrane protein ORF17">
    <location>
        <begin position="1"/>
        <end position="79"/>
    </location>
</feature>
<feature type="transmembrane region" description="Helical" evidence="1">
    <location>
        <begin position="8"/>
        <end position="28"/>
    </location>
</feature>
<feature type="transmembrane region" description="Helical" evidence="1">
    <location>
        <begin position="50"/>
        <end position="70"/>
    </location>
</feature>
<evidence type="ECO:0000255" key="1"/>
<evidence type="ECO:0000305" key="2"/>
<organismHost>
    <name type="scientific">Haloarcula hispanica</name>
    <dbReference type="NCBI Taxonomy" id="51589"/>
</organismHost>
<organism>
    <name type="scientific">His1 virus (isolate Australia/Victoria)</name>
    <name type="common">His1V</name>
    <name type="synonym">Haloarcula hispanica virus 1</name>
    <dbReference type="NCBI Taxonomy" id="654912"/>
    <lineage>
        <taxon>Viruses</taxon>
        <taxon>Viruses incertae sedis</taxon>
        <taxon>Halspiviridae</taxon>
        <taxon>Salterprovirus</taxon>
        <taxon>Salterprovirus His1</taxon>
    </lineage>
</organism>
<name>Y017_HIS1I</name>
<proteinExistence type="predicted"/>
<accession>Q25BH8</accession>
<keyword id="KW-1043">Host membrane</keyword>
<keyword id="KW-0472">Membrane</keyword>
<keyword id="KW-1185">Reference proteome</keyword>
<keyword id="KW-0812">Transmembrane</keyword>
<keyword id="KW-1133">Transmembrane helix</keyword>
<comment type="subcellular location">
    <subcellularLocation>
        <location evidence="2">Host membrane</location>
        <topology evidence="2">Multi-pass membrane protein</topology>
    </subcellularLocation>
</comment>
<reference key="1">
    <citation type="journal article" date="2006" name="Virology">
        <title>His1 and His2 are distantly related, spindle-shaped haloviruses belonging to the novel virus group, Salterprovirus.</title>
        <authorList>
            <person name="Bath C."/>
            <person name="Cukalac T."/>
            <person name="Porter K."/>
            <person name="Dyall-Smith M.L."/>
        </authorList>
    </citation>
    <scope>NUCLEOTIDE SEQUENCE [GENOMIC DNA]</scope>
</reference>
<dbReference type="EMBL" id="AF191796">
    <property type="protein sequence ID" value="AAQ13732.1"/>
    <property type="molecule type" value="Genomic_DNA"/>
</dbReference>
<dbReference type="RefSeq" id="YP_529529.1">
    <property type="nucleotide sequence ID" value="NC_007914.1"/>
</dbReference>
<dbReference type="SMR" id="Q25BH8"/>
<dbReference type="KEGG" id="vg:5142413"/>
<dbReference type="Proteomes" id="UP000007024">
    <property type="component" value="Segment"/>
</dbReference>
<dbReference type="GO" id="GO:0033644">
    <property type="term" value="C:host cell membrane"/>
    <property type="evidence" value="ECO:0007669"/>
    <property type="project" value="UniProtKB-SubCell"/>
</dbReference>
<dbReference type="GO" id="GO:0016020">
    <property type="term" value="C:membrane"/>
    <property type="evidence" value="ECO:0007669"/>
    <property type="project" value="UniProtKB-KW"/>
</dbReference>
<gene>
    <name type="ORF">ORF17</name>
</gene>
<sequence length="79" mass="9486">MIDSLTTLMIYFFLPVSYLLVGFVIMYYTREAFKKHMLENMVSPMWQNYVFVMILLIWPFFLFLVVTTTILKLFKAVVN</sequence>
<protein>
    <recommendedName>
        <fullName>Putative transmembrane protein ORF17</fullName>
    </recommendedName>
</protein>